<accession>P50882</accession>
<accession>A4V0M0</accession>
<accession>Q4V5D8</accession>
<accession>Q9VKL6</accession>
<accession>Q9VKL7</accession>
<feature type="chain" id="PRO_0000131102" description="Large ribosomal subunit protein uL6">
    <location>
        <begin position="1"/>
        <end position="190"/>
    </location>
</feature>
<feature type="sequence conflict" description="In Ref. 1; CAA64319." evidence="1" ref="1">
    <original>S</original>
    <variation>T</variation>
    <location>
        <position position="37"/>
    </location>
</feature>
<keyword id="KW-0002">3D-structure</keyword>
<keyword id="KW-1185">Reference proteome</keyword>
<keyword id="KW-0687">Ribonucleoprotein</keyword>
<keyword id="KW-0689">Ribosomal protein</keyword>
<dbReference type="EMBL" id="X94613">
    <property type="protein sequence ID" value="CAA64319.1"/>
    <property type="molecule type" value="Genomic_DNA"/>
</dbReference>
<dbReference type="EMBL" id="AE014134">
    <property type="protein sequence ID" value="AAF53048.2"/>
    <property type="molecule type" value="Genomic_DNA"/>
</dbReference>
<dbReference type="EMBL" id="AE014134">
    <property type="protein sequence ID" value="AAF53049.1"/>
    <property type="molecule type" value="Genomic_DNA"/>
</dbReference>
<dbReference type="EMBL" id="BT022718">
    <property type="protein sequence ID" value="AAY55134.1"/>
    <property type="molecule type" value="mRNA"/>
</dbReference>
<dbReference type="PIR" id="JC6062">
    <property type="entry name" value="JC6062"/>
</dbReference>
<dbReference type="RefSeq" id="NP_001285826.1">
    <property type="nucleotide sequence ID" value="NM_001298897.1"/>
</dbReference>
<dbReference type="RefSeq" id="NP_477161.1">
    <property type="nucleotide sequence ID" value="NM_057813.4"/>
</dbReference>
<dbReference type="RefSeq" id="NP_723644.1">
    <property type="nucleotide sequence ID" value="NM_164955.2"/>
</dbReference>
<dbReference type="PDB" id="4V6W">
    <property type="method" value="EM"/>
    <property type="resolution" value="6.00 A"/>
    <property type="chains" value="CH=1-190"/>
</dbReference>
<dbReference type="PDB" id="6XU6">
    <property type="method" value="EM"/>
    <property type="resolution" value="3.50 A"/>
    <property type="chains" value="CH=1-190"/>
</dbReference>
<dbReference type="PDB" id="6XU7">
    <property type="method" value="EM"/>
    <property type="resolution" value="4.90 A"/>
    <property type="chains" value="CH=1-190"/>
</dbReference>
<dbReference type="PDB" id="6XU8">
    <property type="method" value="EM"/>
    <property type="resolution" value="3.00 A"/>
    <property type="chains" value="CH=1-190"/>
</dbReference>
<dbReference type="PDBsum" id="4V6W"/>
<dbReference type="PDBsum" id="6XU6"/>
<dbReference type="PDBsum" id="6XU7"/>
<dbReference type="PDBsum" id="6XU8"/>
<dbReference type="EMDB" id="EMD-10622"/>
<dbReference type="EMDB" id="EMD-10623"/>
<dbReference type="EMDB" id="EMD-10624"/>
<dbReference type="SMR" id="P50882"/>
<dbReference type="BioGRID" id="60590">
    <property type="interactions" value="116"/>
</dbReference>
<dbReference type="DIP" id="DIP-20042N"/>
<dbReference type="FunCoup" id="P50882">
    <property type="interactions" value="1132"/>
</dbReference>
<dbReference type="IntAct" id="P50882">
    <property type="interactions" value="14"/>
</dbReference>
<dbReference type="MINT" id="P50882"/>
<dbReference type="STRING" id="7227.FBpp0309201"/>
<dbReference type="PaxDb" id="7227-FBpp0079752"/>
<dbReference type="DNASU" id="34526"/>
<dbReference type="EnsemblMetazoa" id="FBtr0080163">
    <property type="protein sequence ID" value="FBpp0079752"/>
    <property type="gene ID" value="FBgn0015756"/>
</dbReference>
<dbReference type="EnsemblMetazoa" id="FBtr0080164">
    <property type="protein sequence ID" value="FBpp0079753"/>
    <property type="gene ID" value="FBgn0015756"/>
</dbReference>
<dbReference type="EnsemblMetazoa" id="FBtr0340226">
    <property type="protein sequence ID" value="FBpp0309201"/>
    <property type="gene ID" value="FBgn0015756"/>
</dbReference>
<dbReference type="GeneID" id="34526"/>
<dbReference type="KEGG" id="dme:Dmel_CG6141"/>
<dbReference type="AGR" id="FB:FBgn0015756"/>
<dbReference type="CTD" id="6133"/>
<dbReference type="FlyBase" id="FBgn0015756">
    <property type="gene designation" value="RpL9"/>
</dbReference>
<dbReference type="VEuPathDB" id="VectorBase:FBgn0015756"/>
<dbReference type="eggNOG" id="KOG3255">
    <property type="taxonomic scope" value="Eukaryota"/>
</dbReference>
<dbReference type="HOGENOM" id="CLU_065464_0_0_1"/>
<dbReference type="InParanoid" id="P50882"/>
<dbReference type="OMA" id="YAHFPMK"/>
<dbReference type="OrthoDB" id="10252633at2759"/>
<dbReference type="PhylomeDB" id="P50882"/>
<dbReference type="Reactome" id="R-DME-156827">
    <property type="pathway name" value="L13a-mediated translational silencing of Ceruloplasmin expression"/>
</dbReference>
<dbReference type="Reactome" id="R-DME-1799339">
    <property type="pathway name" value="SRP-dependent cotranslational protein targeting to membrane"/>
</dbReference>
<dbReference type="Reactome" id="R-DME-72689">
    <property type="pathway name" value="Formation of a pool of free 40S subunits"/>
</dbReference>
<dbReference type="Reactome" id="R-DME-72706">
    <property type="pathway name" value="GTP hydrolysis and joining of the 60S ribosomal subunit"/>
</dbReference>
<dbReference type="Reactome" id="R-DME-975956">
    <property type="pathway name" value="Nonsense Mediated Decay (NMD) independent of the Exon Junction Complex (EJC)"/>
</dbReference>
<dbReference type="Reactome" id="R-DME-975957">
    <property type="pathway name" value="Nonsense Mediated Decay (NMD) enhanced by the Exon Junction Complex (EJC)"/>
</dbReference>
<dbReference type="SignaLink" id="P50882"/>
<dbReference type="BioGRID-ORCS" id="34526">
    <property type="hits" value="1 hit in 1 CRISPR screen"/>
</dbReference>
<dbReference type="ChiTaRS" id="RpL9">
    <property type="organism name" value="fly"/>
</dbReference>
<dbReference type="GenomeRNAi" id="34526"/>
<dbReference type="PRO" id="PR:P50882"/>
<dbReference type="Proteomes" id="UP000000803">
    <property type="component" value="Chromosome 2L"/>
</dbReference>
<dbReference type="Bgee" id="FBgn0015756">
    <property type="expression patterns" value="Expressed in eye disc (Drosophila) and 289 other cell types or tissues"/>
</dbReference>
<dbReference type="ExpressionAtlas" id="P50882">
    <property type="expression patterns" value="baseline and differential"/>
</dbReference>
<dbReference type="GO" id="GO:0022625">
    <property type="term" value="C:cytosolic large ribosomal subunit"/>
    <property type="evidence" value="ECO:0000318"/>
    <property type="project" value="GO_Central"/>
</dbReference>
<dbReference type="GO" id="GO:0022626">
    <property type="term" value="C:cytosolic ribosome"/>
    <property type="evidence" value="ECO:0000314"/>
    <property type="project" value="FlyBase"/>
</dbReference>
<dbReference type="GO" id="GO:0019843">
    <property type="term" value="F:rRNA binding"/>
    <property type="evidence" value="ECO:0007669"/>
    <property type="project" value="InterPro"/>
</dbReference>
<dbReference type="GO" id="GO:0003735">
    <property type="term" value="F:structural constituent of ribosome"/>
    <property type="evidence" value="ECO:0000314"/>
    <property type="project" value="FlyBase"/>
</dbReference>
<dbReference type="GO" id="GO:0002181">
    <property type="term" value="P:cytoplasmic translation"/>
    <property type="evidence" value="ECO:0000318"/>
    <property type="project" value="GO_Central"/>
</dbReference>
<dbReference type="FunFam" id="3.90.930.12:FF:000003">
    <property type="entry name" value="60S ribosomal protein L9"/>
    <property type="match status" value="1"/>
</dbReference>
<dbReference type="FunFam" id="3.90.930.12:FF:000004">
    <property type="entry name" value="60S ribosomal protein L9"/>
    <property type="match status" value="1"/>
</dbReference>
<dbReference type="Gene3D" id="3.90.930.12">
    <property type="entry name" value="Ribosomal protein L6, alpha-beta domain"/>
    <property type="match status" value="2"/>
</dbReference>
<dbReference type="InterPro" id="IPR000702">
    <property type="entry name" value="Ribosomal_uL6-like"/>
</dbReference>
<dbReference type="InterPro" id="IPR036789">
    <property type="entry name" value="Ribosomal_uL6-like_a/b-dom_sf"/>
</dbReference>
<dbReference type="InterPro" id="IPR020040">
    <property type="entry name" value="Ribosomal_uL6_a/b-dom"/>
</dbReference>
<dbReference type="InterPro" id="IPR002359">
    <property type="entry name" value="Ribosomal_uL6_CS2"/>
</dbReference>
<dbReference type="PANTHER" id="PTHR11655:SF16">
    <property type="entry name" value="60S RIBOSOMAL PROTEIN L9"/>
    <property type="match status" value="1"/>
</dbReference>
<dbReference type="PANTHER" id="PTHR11655">
    <property type="entry name" value="60S/50S RIBOSOMAL PROTEIN L6/L9"/>
    <property type="match status" value="1"/>
</dbReference>
<dbReference type="Pfam" id="PF00347">
    <property type="entry name" value="Ribosomal_L6"/>
    <property type="match status" value="2"/>
</dbReference>
<dbReference type="PIRSF" id="PIRSF002162">
    <property type="entry name" value="Ribosomal_L6"/>
    <property type="match status" value="1"/>
</dbReference>
<dbReference type="SUPFAM" id="SSF56053">
    <property type="entry name" value="Ribosomal protein L6"/>
    <property type="match status" value="2"/>
</dbReference>
<dbReference type="PROSITE" id="PS00700">
    <property type="entry name" value="RIBOSOMAL_L6_2"/>
    <property type="match status" value="1"/>
</dbReference>
<evidence type="ECO:0000305" key="1"/>
<sequence>MRTINSNQCVKIPKDIKASVKARVVTITGTRGTLKRSFKHLALDMYMPDKRTLKVEKWFGTKKELAAVRTVCSHIENMIKGVTFGFQYKMRAVYAHFPINCVTSENNTVIEIRNFLGEKYIRRVEMAPGVTVVNSTAQKDELIVEGNDIESVSGSAALIQQSTTVKNKDIRKFLDGLYVSEKTTVVKLES</sequence>
<organism>
    <name type="scientific">Drosophila melanogaster</name>
    <name type="common">Fruit fly</name>
    <dbReference type="NCBI Taxonomy" id="7227"/>
    <lineage>
        <taxon>Eukaryota</taxon>
        <taxon>Metazoa</taxon>
        <taxon>Ecdysozoa</taxon>
        <taxon>Arthropoda</taxon>
        <taxon>Hexapoda</taxon>
        <taxon>Insecta</taxon>
        <taxon>Pterygota</taxon>
        <taxon>Neoptera</taxon>
        <taxon>Endopterygota</taxon>
        <taxon>Diptera</taxon>
        <taxon>Brachycera</taxon>
        <taxon>Muscomorpha</taxon>
        <taxon>Ephydroidea</taxon>
        <taxon>Drosophilidae</taxon>
        <taxon>Drosophila</taxon>
        <taxon>Sophophora</taxon>
    </lineage>
</organism>
<gene>
    <name type="primary">RpL9</name>
    <name type="synonym">M(2)32D</name>
    <name type="ORF">CG6141</name>
</gene>
<protein>
    <recommendedName>
        <fullName evidence="1">Large ribosomal subunit protein uL6</fullName>
    </recommendedName>
    <alternativeName>
        <fullName>60S ribosomal protein L9</fullName>
    </alternativeName>
</protein>
<comment type="similarity">
    <text evidence="1">Belongs to the universal ribosomal protein uL6 family.</text>
</comment>
<reference key="1">
    <citation type="journal article" date="1996" name="Mol. Gen. Genet.">
        <title>A newly identified Minute locus, M(2)32D, encodes the ribosomal protein L9 in Drosophila melanogaster.</title>
        <authorList>
            <person name="Schmidt A."/>
            <person name="Hollmann M."/>
            <person name="Schaefer U."/>
        </authorList>
    </citation>
    <scope>NUCLEOTIDE SEQUENCE [GENOMIC DNA]</scope>
    <source>
        <strain>Canton-S</strain>
        <tissue>Embryo</tissue>
    </source>
</reference>
<reference key="2">
    <citation type="journal article" date="2000" name="Science">
        <title>The genome sequence of Drosophila melanogaster.</title>
        <authorList>
            <person name="Adams M.D."/>
            <person name="Celniker S.E."/>
            <person name="Holt R.A."/>
            <person name="Evans C.A."/>
            <person name="Gocayne J.D."/>
            <person name="Amanatides P.G."/>
            <person name="Scherer S.E."/>
            <person name="Li P.W."/>
            <person name="Hoskins R.A."/>
            <person name="Galle R.F."/>
            <person name="George R.A."/>
            <person name="Lewis S.E."/>
            <person name="Richards S."/>
            <person name="Ashburner M."/>
            <person name="Henderson S.N."/>
            <person name="Sutton G.G."/>
            <person name="Wortman J.R."/>
            <person name="Yandell M.D."/>
            <person name="Zhang Q."/>
            <person name="Chen L.X."/>
            <person name="Brandon R.C."/>
            <person name="Rogers Y.-H.C."/>
            <person name="Blazej R.G."/>
            <person name="Champe M."/>
            <person name="Pfeiffer B.D."/>
            <person name="Wan K.H."/>
            <person name="Doyle C."/>
            <person name="Baxter E.G."/>
            <person name="Helt G."/>
            <person name="Nelson C.R."/>
            <person name="Miklos G.L.G."/>
            <person name="Abril J.F."/>
            <person name="Agbayani A."/>
            <person name="An H.-J."/>
            <person name="Andrews-Pfannkoch C."/>
            <person name="Baldwin D."/>
            <person name="Ballew R.M."/>
            <person name="Basu A."/>
            <person name="Baxendale J."/>
            <person name="Bayraktaroglu L."/>
            <person name="Beasley E.M."/>
            <person name="Beeson K.Y."/>
            <person name="Benos P.V."/>
            <person name="Berman B.P."/>
            <person name="Bhandari D."/>
            <person name="Bolshakov S."/>
            <person name="Borkova D."/>
            <person name="Botchan M.R."/>
            <person name="Bouck J."/>
            <person name="Brokstein P."/>
            <person name="Brottier P."/>
            <person name="Burtis K.C."/>
            <person name="Busam D.A."/>
            <person name="Butler H."/>
            <person name="Cadieu E."/>
            <person name="Center A."/>
            <person name="Chandra I."/>
            <person name="Cherry J.M."/>
            <person name="Cawley S."/>
            <person name="Dahlke C."/>
            <person name="Davenport L.B."/>
            <person name="Davies P."/>
            <person name="de Pablos B."/>
            <person name="Delcher A."/>
            <person name="Deng Z."/>
            <person name="Mays A.D."/>
            <person name="Dew I."/>
            <person name="Dietz S.M."/>
            <person name="Dodson K."/>
            <person name="Doup L.E."/>
            <person name="Downes M."/>
            <person name="Dugan-Rocha S."/>
            <person name="Dunkov B.C."/>
            <person name="Dunn P."/>
            <person name="Durbin K.J."/>
            <person name="Evangelista C.C."/>
            <person name="Ferraz C."/>
            <person name="Ferriera S."/>
            <person name="Fleischmann W."/>
            <person name="Fosler C."/>
            <person name="Gabrielian A.E."/>
            <person name="Garg N.S."/>
            <person name="Gelbart W.M."/>
            <person name="Glasser K."/>
            <person name="Glodek A."/>
            <person name="Gong F."/>
            <person name="Gorrell J.H."/>
            <person name="Gu Z."/>
            <person name="Guan P."/>
            <person name="Harris M."/>
            <person name="Harris N.L."/>
            <person name="Harvey D.A."/>
            <person name="Heiman T.J."/>
            <person name="Hernandez J.R."/>
            <person name="Houck J."/>
            <person name="Hostin D."/>
            <person name="Houston K.A."/>
            <person name="Howland T.J."/>
            <person name="Wei M.-H."/>
            <person name="Ibegwam C."/>
            <person name="Jalali M."/>
            <person name="Kalush F."/>
            <person name="Karpen G.H."/>
            <person name="Ke Z."/>
            <person name="Kennison J.A."/>
            <person name="Ketchum K.A."/>
            <person name="Kimmel B.E."/>
            <person name="Kodira C.D."/>
            <person name="Kraft C.L."/>
            <person name="Kravitz S."/>
            <person name="Kulp D."/>
            <person name="Lai Z."/>
            <person name="Lasko P."/>
            <person name="Lei Y."/>
            <person name="Levitsky A.A."/>
            <person name="Li J.H."/>
            <person name="Li Z."/>
            <person name="Liang Y."/>
            <person name="Lin X."/>
            <person name="Liu X."/>
            <person name="Mattei B."/>
            <person name="McIntosh T.C."/>
            <person name="McLeod M.P."/>
            <person name="McPherson D."/>
            <person name="Merkulov G."/>
            <person name="Milshina N.V."/>
            <person name="Mobarry C."/>
            <person name="Morris J."/>
            <person name="Moshrefi A."/>
            <person name="Mount S.M."/>
            <person name="Moy M."/>
            <person name="Murphy B."/>
            <person name="Murphy L."/>
            <person name="Muzny D.M."/>
            <person name="Nelson D.L."/>
            <person name="Nelson D.R."/>
            <person name="Nelson K.A."/>
            <person name="Nixon K."/>
            <person name="Nusskern D.R."/>
            <person name="Pacleb J.M."/>
            <person name="Palazzolo M."/>
            <person name="Pittman G.S."/>
            <person name="Pan S."/>
            <person name="Pollard J."/>
            <person name="Puri V."/>
            <person name="Reese M.G."/>
            <person name="Reinert K."/>
            <person name="Remington K."/>
            <person name="Saunders R.D.C."/>
            <person name="Scheeler F."/>
            <person name="Shen H."/>
            <person name="Shue B.C."/>
            <person name="Siden-Kiamos I."/>
            <person name="Simpson M."/>
            <person name="Skupski M.P."/>
            <person name="Smith T.J."/>
            <person name="Spier E."/>
            <person name="Spradling A.C."/>
            <person name="Stapleton M."/>
            <person name="Strong R."/>
            <person name="Sun E."/>
            <person name="Svirskas R."/>
            <person name="Tector C."/>
            <person name="Turner R."/>
            <person name="Venter E."/>
            <person name="Wang A.H."/>
            <person name="Wang X."/>
            <person name="Wang Z.-Y."/>
            <person name="Wassarman D.A."/>
            <person name="Weinstock G.M."/>
            <person name="Weissenbach J."/>
            <person name="Williams S.M."/>
            <person name="Woodage T."/>
            <person name="Worley K.C."/>
            <person name="Wu D."/>
            <person name="Yang S."/>
            <person name="Yao Q.A."/>
            <person name="Ye J."/>
            <person name="Yeh R.-F."/>
            <person name="Zaveri J.S."/>
            <person name="Zhan M."/>
            <person name="Zhang G."/>
            <person name="Zhao Q."/>
            <person name="Zheng L."/>
            <person name="Zheng X.H."/>
            <person name="Zhong F.N."/>
            <person name="Zhong W."/>
            <person name="Zhou X."/>
            <person name="Zhu S.C."/>
            <person name="Zhu X."/>
            <person name="Smith H.O."/>
            <person name="Gibbs R.A."/>
            <person name="Myers E.W."/>
            <person name="Rubin G.M."/>
            <person name="Venter J.C."/>
        </authorList>
    </citation>
    <scope>NUCLEOTIDE SEQUENCE [LARGE SCALE GENOMIC DNA]</scope>
    <source>
        <strain>Berkeley</strain>
    </source>
</reference>
<reference key="3">
    <citation type="journal article" date="2002" name="Genome Biol.">
        <title>Annotation of the Drosophila melanogaster euchromatic genome: a systematic review.</title>
        <authorList>
            <person name="Misra S."/>
            <person name="Crosby M.A."/>
            <person name="Mungall C.J."/>
            <person name="Matthews B.B."/>
            <person name="Campbell K.S."/>
            <person name="Hradecky P."/>
            <person name="Huang Y."/>
            <person name="Kaminker J.S."/>
            <person name="Millburn G.H."/>
            <person name="Prochnik S.E."/>
            <person name="Smith C.D."/>
            <person name="Tupy J.L."/>
            <person name="Whitfield E.J."/>
            <person name="Bayraktaroglu L."/>
            <person name="Berman B.P."/>
            <person name="Bettencourt B.R."/>
            <person name="Celniker S.E."/>
            <person name="de Grey A.D.N.J."/>
            <person name="Drysdale R.A."/>
            <person name="Harris N.L."/>
            <person name="Richter J."/>
            <person name="Russo S."/>
            <person name="Schroeder A.J."/>
            <person name="Shu S.Q."/>
            <person name="Stapleton M."/>
            <person name="Yamada C."/>
            <person name="Ashburner M."/>
            <person name="Gelbart W.M."/>
            <person name="Rubin G.M."/>
            <person name="Lewis S.E."/>
        </authorList>
    </citation>
    <scope>GENOME REANNOTATION</scope>
    <source>
        <strain>Berkeley</strain>
    </source>
</reference>
<reference key="4">
    <citation type="submission" date="2005-05" db="EMBL/GenBank/DDBJ databases">
        <authorList>
            <person name="Stapleton M."/>
            <person name="Carlson J.W."/>
            <person name="Chavez C."/>
            <person name="Frise E."/>
            <person name="George R.A."/>
            <person name="Pacleb J.M."/>
            <person name="Park S."/>
            <person name="Wan K.H."/>
            <person name="Yu C."/>
            <person name="Celniker S.E."/>
        </authorList>
    </citation>
    <scope>NUCLEOTIDE SEQUENCE [LARGE SCALE MRNA]</scope>
    <source>
        <strain>Berkeley</strain>
        <tissue>Embryo</tissue>
    </source>
</reference>
<reference key="5">
    <citation type="journal article" date="2013" name="Nature">
        <title>Structures of the human and Drosophila 80S ribosome.</title>
        <authorList>
            <person name="Anger A.M."/>
            <person name="Armache J.P."/>
            <person name="Berninghausen O."/>
            <person name="Habeck M."/>
            <person name="Subklewe M."/>
            <person name="Wilson D.N."/>
            <person name="Beckmann R."/>
        </authorList>
    </citation>
    <scope>STRUCTURE BY ELECTRON MICROSCOPY (6.0 ANGSTROMS) OF THE 80S RIBOSOME</scope>
</reference>
<proteinExistence type="evidence at protein level"/>
<name>RL9_DROME</name>